<organism>
    <name type="scientific">Coprinopsis cinerea (strain Okayama-7 / 130 / ATCC MYA-4618 / FGSC 9003)</name>
    <name type="common">Inky cap fungus</name>
    <name type="synonym">Hormographiella aspergillata</name>
    <dbReference type="NCBI Taxonomy" id="240176"/>
    <lineage>
        <taxon>Eukaryota</taxon>
        <taxon>Fungi</taxon>
        <taxon>Dikarya</taxon>
        <taxon>Basidiomycota</taxon>
        <taxon>Agaricomycotina</taxon>
        <taxon>Agaricomycetes</taxon>
        <taxon>Agaricomycetidae</taxon>
        <taxon>Agaricales</taxon>
        <taxon>Agaricineae</taxon>
        <taxon>Psathyrellaceae</taxon>
        <taxon>Coprinopsis</taxon>
    </lineage>
</organism>
<name>DUS3_COPC7</name>
<evidence type="ECO:0000250" key="1">
    <source>
        <dbReference type="UniProtKB" id="Q06053"/>
    </source>
</evidence>
<evidence type="ECO:0000250" key="2">
    <source>
        <dbReference type="UniProtKB" id="Q5SMC7"/>
    </source>
</evidence>
<evidence type="ECO:0000250" key="3">
    <source>
        <dbReference type="UniProtKB" id="Q9UTH9"/>
    </source>
</evidence>
<evidence type="ECO:0000255" key="4">
    <source>
        <dbReference type="PROSITE-ProRule" id="PRU00723"/>
    </source>
</evidence>
<evidence type="ECO:0000256" key="5">
    <source>
        <dbReference type="SAM" id="MobiDB-lite"/>
    </source>
</evidence>
<evidence type="ECO:0000305" key="6"/>
<comment type="function">
    <text evidence="1 3">Catalyzes the synthesis of dihydrouridine, a modified base found in the D-loop of most tRNAs. Specifically modifies U47 in cytoplasmic tRNAs (By similarity). Catalyzes the synthesis of dihydrouridine in some mRNAs, thereby affecting their translation (By similarity).</text>
</comment>
<comment type="catalytic activity">
    <reaction evidence="1">
        <text>5,6-dihydrouridine(47) in tRNA + NAD(+) = uridine(47) in tRNA + NADH + H(+)</text>
        <dbReference type="Rhea" id="RHEA:53364"/>
        <dbReference type="Rhea" id="RHEA-COMP:13539"/>
        <dbReference type="Rhea" id="RHEA-COMP:13540"/>
        <dbReference type="ChEBI" id="CHEBI:15378"/>
        <dbReference type="ChEBI" id="CHEBI:57540"/>
        <dbReference type="ChEBI" id="CHEBI:57945"/>
        <dbReference type="ChEBI" id="CHEBI:65315"/>
        <dbReference type="ChEBI" id="CHEBI:74443"/>
        <dbReference type="EC" id="1.3.1.89"/>
    </reaction>
    <physiologicalReaction direction="right-to-left" evidence="1">
        <dbReference type="Rhea" id="RHEA:53366"/>
    </physiologicalReaction>
</comment>
<comment type="catalytic activity">
    <reaction evidence="1">
        <text>5,6-dihydrouridine(47) in tRNA + NADP(+) = uridine(47) in tRNA + NADPH + H(+)</text>
        <dbReference type="Rhea" id="RHEA:53360"/>
        <dbReference type="Rhea" id="RHEA-COMP:13539"/>
        <dbReference type="Rhea" id="RHEA-COMP:13540"/>
        <dbReference type="ChEBI" id="CHEBI:15378"/>
        <dbReference type="ChEBI" id="CHEBI:57783"/>
        <dbReference type="ChEBI" id="CHEBI:58349"/>
        <dbReference type="ChEBI" id="CHEBI:65315"/>
        <dbReference type="ChEBI" id="CHEBI:74443"/>
        <dbReference type="EC" id="1.3.1.89"/>
    </reaction>
    <physiologicalReaction direction="right-to-left" evidence="1">
        <dbReference type="Rhea" id="RHEA:53362"/>
    </physiologicalReaction>
</comment>
<comment type="catalytic activity">
    <reaction evidence="3">
        <text>a 5,6-dihydrouridine in mRNA + NAD(+) = a uridine in mRNA + NADH + H(+)</text>
        <dbReference type="Rhea" id="RHEA:69851"/>
        <dbReference type="Rhea" id="RHEA-COMP:14658"/>
        <dbReference type="Rhea" id="RHEA-COMP:17789"/>
        <dbReference type="ChEBI" id="CHEBI:15378"/>
        <dbReference type="ChEBI" id="CHEBI:57540"/>
        <dbReference type="ChEBI" id="CHEBI:57945"/>
        <dbReference type="ChEBI" id="CHEBI:65315"/>
        <dbReference type="ChEBI" id="CHEBI:74443"/>
    </reaction>
    <physiologicalReaction direction="right-to-left" evidence="3">
        <dbReference type="Rhea" id="RHEA:69853"/>
    </physiologicalReaction>
</comment>
<comment type="catalytic activity">
    <reaction evidence="3">
        <text>a 5,6-dihydrouridine in mRNA + NADP(+) = a uridine in mRNA + NADPH + H(+)</text>
        <dbReference type="Rhea" id="RHEA:69855"/>
        <dbReference type="Rhea" id="RHEA-COMP:14658"/>
        <dbReference type="Rhea" id="RHEA-COMP:17789"/>
        <dbReference type="ChEBI" id="CHEBI:15378"/>
        <dbReference type="ChEBI" id="CHEBI:57783"/>
        <dbReference type="ChEBI" id="CHEBI:58349"/>
        <dbReference type="ChEBI" id="CHEBI:65315"/>
        <dbReference type="ChEBI" id="CHEBI:74443"/>
    </reaction>
    <physiologicalReaction direction="right-to-left" evidence="3">
        <dbReference type="Rhea" id="RHEA:69857"/>
    </physiologicalReaction>
</comment>
<comment type="cofactor">
    <cofactor evidence="2">
        <name>FMN</name>
        <dbReference type="ChEBI" id="CHEBI:58210"/>
    </cofactor>
</comment>
<comment type="subcellular location">
    <subcellularLocation>
        <location evidence="1">Cytoplasm</location>
    </subcellularLocation>
    <subcellularLocation>
        <location evidence="1">Nucleus</location>
    </subcellularLocation>
</comment>
<comment type="similarity">
    <text evidence="6">Belongs to the Dus family. Dus3 subfamily.</text>
</comment>
<protein>
    <recommendedName>
        <fullName>tRNA-dihydrouridine(47) synthase [NAD(P)(+)]</fullName>
        <ecNumber evidence="1">1.3.1.89</ecNumber>
    </recommendedName>
    <alternativeName>
        <fullName>mRNA-dihydrouridine synthase DUS3</fullName>
        <ecNumber evidence="3">1.3.1.-</ecNumber>
    </alternativeName>
    <alternativeName>
        <fullName>tRNA-dihydrouridine synthase 3</fullName>
    </alternativeName>
</protein>
<gene>
    <name type="primary">DUS3</name>
    <name type="ORF">CC1G_12476</name>
</gene>
<proteinExistence type="inferred from homology"/>
<dbReference type="EC" id="1.3.1.89" evidence="1"/>
<dbReference type="EC" id="1.3.1.-" evidence="3"/>
<dbReference type="EMBL" id="AACS02000006">
    <property type="protein sequence ID" value="EAU84036.1"/>
    <property type="molecule type" value="Genomic_DNA"/>
</dbReference>
<dbReference type="RefSeq" id="XP_001837779.1">
    <property type="nucleotide sequence ID" value="XM_001837727.1"/>
</dbReference>
<dbReference type="SMR" id="A8NZY7"/>
<dbReference type="FunCoup" id="A8NZY7">
    <property type="interactions" value="460"/>
</dbReference>
<dbReference type="STRING" id="240176.A8NZY7"/>
<dbReference type="GeneID" id="6014341"/>
<dbReference type="KEGG" id="cci:CC1G_12476"/>
<dbReference type="VEuPathDB" id="FungiDB:CC1G_12476"/>
<dbReference type="eggNOG" id="KOG2333">
    <property type="taxonomic scope" value="Eukaryota"/>
</dbReference>
<dbReference type="HOGENOM" id="CLU_013299_7_0_1"/>
<dbReference type="InParanoid" id="A8NZY7"/>
<dbReference type="OMA" id="WSYIAEC"/>
<dbReference type="OrthoDB" id="259935at2759"/>
<dbReference type="Proteomes" id="UP000001861">
    <property type="component" value="Unassembled WGS sequence"/>
</dbReference>
<dbReference type="GO" id="GO:0005737">
    <property type="term" value="C:cytoplasm"/>
    <property type="evidence" value="ECO:0007669"/>
    <property type="project" value="UniProtKB-SubCell"/>
</dbReference>
<dbReference type="GO" id="GO:0005634">
    <property type="term" value="C:nucleus"/>
    <property type="evidence" value="ECO:0007669"/>
    <property type="project" value="UniProtKB-SubCell"/>
</dbReference>
<dbReference type="GO" id="GO:0050660">
    <property type="term" value="F:flavin adenine dinucleotide binding"/>
    <property type="evidence" value="ECO:0007669"/>
    <property type="project" value="InterPro"/>
</dbReference>
<dbReference type="GO" id="GO:0106414">
    <property type="term" value="F:mRNA dihydrouridine synthase activity"/>
    <property type="evidence" value="ECO:0007669"/>
    <property type="project" value="RHEA"/>
</dbReference>
<dbReference type="GO" id="GO:0003723">
    <property type="term" value="F:RNA binding"/>
    <property type="evidence" value="ECO:0007669"/>
    <property type="project" value="TreeGrafter"/>
</dbReference>
<dbReference type="GO" id="GO:0102265">
    <property type="term" value="F:tRNA-dihydrouridine47 synthase activity"/>
    <property type="evidence" value="ECO:0007669"/>
    <property type="project" value="UniProtKB-EC"/>
</dbReference>
<dbReference type="GO" id="GO:0008270">
    <property type="term" value="F:zinc ion binding"/>
    <property type="evidence" value="ECO:0007669"/>
    <property type="project" value="UniProtKB-KW"/>
</dbReference>
<dbReference type="GO" id="GO:0006397">
    <property type="term" value="P:mRNA processing"/>
    <property type="evidence" value="ECO:0007669"/>
    <property type="project" value="UniProtKB-KW"/>
</dbReference>
<dbReference type="CDD" id="cd02801">
    <property type="entry name" value="DUS_like_FMN"/>
    <property type="match status" value="1"/>
</dbReference>
<dbReference type="FunFam" id="3.20.20.70:FF:000067">
    <property type="entry name" value="tRNA-dihydrouridine(47) synthase [NAD(P)(+)]"/>
    <property type="match status" value="1"/>
</dbReference>
<dbReference type="Gene3D" id="3.20.20.70">
    <property type="entry name" value="Aldolase class I"/>
    <property type="match status" value="1"/>
</dbReference>
<dbReference type="Gene3D" id="4.10.1000.10">
    <property type="entry name" value="Zinc finger, CCCH-type"/>
    <property type="match status" value="1"/>
</dbReference>
<dbReference type="InterPro" id="IPR013785">
    <property type="entry name" value="Aldolase_TIM"/>
</dbReference>
<dbReference type="InterPro" id="IPR035587">
    <property type="entry name" value="DUS-like_FMN-bd"/>
</dbReference>
<dbReference type="InterPro" id="IPR018517">
    <property type="entry name" value="tRNA_hU_synthase_CS"/>
</dbReference>
<dbReference type="InterPro" id="IPR041367">
    <property type="entry name" value="Znf-CCCH_4"/>
</dbReference>
<dbReference type="InterPro" id="IPR000571">
    <property type="entry name" value="Znf_CCCH"/>
</dbReference>
<dbReference type="InterPro" id="IPR036855">
    <property type="entry name" value="Znf_CCCH_sf"/>
</dbReference>
<dbReference type="PANTHER" id="PTHR45846">
    <property type="entry name" value="TRNA-DIHYDROURIDINE(47) SYNTHASE [NAD(P)(+)]-LIKE"/>
    <property type="match status" value="1"/>
</dbReference>
<dbReference type="PANTHER" id="PTHR45846:SF1">
    <property type="entry name" value="TRNA-DIHYDROURIDINE(47) SYNTHASE [NAD(P)(+)]-LIKE"/>
    <property type="match status" value="1"/>
</dbReference>
<dbReference type="Pfam" id="PF01207">
    <property type="entry name" value="Dus"/>
    <property type="match status" value="1"/>
</dbReference>
<dbReference type="Pfam" id="PF18044">
    <property type="entry name" value="zf-CCCH_4"/>
    <property type="match status" value="1"/>
</dbReference>
<dbReference type="SUPFAM" id="SSF90229">
    <property type="entry name" value="CCCH zinc finger"/>
    <property type="match status" value="1"/>
</dbReference>
<dbReference type="SUPFAM" id="SSF51395">
    <property type="entry name" value="FMN-linked oxidoreductases"/>
    <property type="match status" value="1"/>
</dbReference>
<dbReference type="PROSITE" id="PS01136">
    <property type="entry name" value="UPF0034"/>
    <property type="match status" value="1"/>
</dbReference>
<dbReference type="PROSITE" id="PS50103">
    <property type="entry name" value="ZF_C3H1"/>
    <property type="match status" value="2"/>
</dbReference>
<reference key="1">
    <citation type="journal article" date="2010" name="Proc. Natl. Acad. Sci. U.S.A.">
        <title>Insights into evolution of multicellular fungi from the assembled chromosomes of the mushroom Coprinopsis cinerea (Coprinus cinereus).</title>
        <authorList>
            <person name="Stajich J.E."/>
            <person name="Wilke S.K."/>
            <person name="Ahren D."/>
            <person name="Au C.H."/>
            <person name="Birren B.W."/>
            <person name="Borodovsky M."/>
            <person name="Burns C."/>
            <person name="Canbaeck B."/>
            <person name="Casselton L.A."/>
            <person name="Cheng C.K."/>
            <person name="Deng J."/>
            <person name="Dietrich F.S."/>
            <person name="Fargo D.C."/>
            <person name="Farman M.L."/>
            <person name="Gathman A.C."/>
            <person name="Goldberg J."/>
            <person name="Guigo R."/>
            <person name="Hoegger P.J."/>
            <person name="Hooker J.B."/>
            <person name="Huggins A."/>
            <person name="James T.Y."/>
            <person name="Kamada T."/>
            <person name="Kilaru S."/>
            <person name="Kodira C."/>
            <person name="Kuees U."/>
            <person name="Kupfer D."/>
            <person name="Kwan H.S."/>
            <person name="Lomsadze A."/>
            <person name="Li W."/>
            <person name="Lilly W.W."/>
            <person name="Ma L.-J."/>
            <person name="Mackey A.J."/>
            <person name="Manning G."/>
            <person name="Martin F."/>
            <person name="Muraguchi H."/>
            <person name="Natvig D.O."/>
            <person name="Palmerini H."/>
            <person name="Ramesh M.A."/>
            <person name="Rehmeyer C.J."/>
            <person name="Roe B.A."/>
            <person name="Shenoy N."/>
            <person name="Stanke M."/>
            <person name="Ter-Hovhannisyan V."/>
            <person name="Tunlid A."/>
            <person name="Velagapudi R."/>
            <person name="Vision T.J."/>
            <person name="Zeng Q."/>
            <person name="Zolan M.E."/>
            <person name="Pukkila P.J."/>
        </authorList>
    </citation>
    <scope>NUCLEOTIDE SEQUENCE [LARGE SCALE GENOMIC DNA]</scope>
    <source>
        <strain>Okayama-7 / 130 / ATCC MYA-4618 / FGSC 9003</strain>
    </source>
</reference>
<accession>A8NZY7</accession>
<feature type="chain" id="PRO_0000330236" description="tRNA-dihydrouridine(47) synthase [NAD(P)(+)]">
    <location>
        <begin position="1"/>
        <end position="676"/>
    </location>
</feature>
<feature type="zinc finger region" description="C3H1-type 1" evidence="4">
    <location>
        <begin position="78"/>
        <end position="106"/>
    </location>
</feature>
<feature type="zinc finger region" description="C3H1-type 2" evidence="4">
    <location>
        <begin position="152"/>
        <end position="177"/>
    </location>
</feature>
<feature type="region of interest" description="Disordered" evidence="5">
    <location>
        <begin position="1"/>
        <end position="72"/>
    </location>
</feature>
<feature type="region of interest" description="Disordered" evidence="5">
    <location>
        <begin position="253"/>
        <end position="298"/>
    </location>
</feature>
<feature type="compositionally biased region" description="Basic residues" evidence="5">
    <location>
        <begin position="56"/>
        <end position="72"/>
    </location>
</feature>
<feature type="compositionally biased region" description="Polar residues" evidence="5">
    <location>
        <begin position="253"/>
        <end position="272"/>
    </location>
</feature>
<feature type="active site" description="Proton donor" evidence="2">
    <location>
        <position position="404"/>
    </location>
</feature>
<feature type="binding site" evidence="2">
    <location>
        <begin position="317"/>
        <end position="319"/>
    </location>
    <ligand>
        <name>FMN</name>
        <dbReference type="ChEBI" id="CHEBI:58210"/>
    </ligand>
</feature>
<feature type="binding site" evidence="2">
    <location>
        <position position="371"/>
    </location>
    <ligand>
        <name>FMN</name>
        <dbReference type="ChEBI" id="CHEBI:58210"/>
    </ligand>
</feature>
<feature type="binding site" evidence="2">
    <location>
        <position position="444"/>
    </location>
    <ligand>
        <name>FMN</name>
        <dbReference type="ChEBI" id="CHEBI:58210"/>
    </ligand>
</feature>
<feature type="binding site" evidence="2">
    <location>
        <position position="475"/>
    </location>
    <ligand>
        <name>FMN</name>
        <dbReference type="ChEBI" id="CHEBI:58210"/>
    </ligand>
</feature>
<feature type="binding site" evidence="2">
    <location>
        <begin position="516"/>
        <end position="518"/>
    </location>
    <ligand>
        <name>FMN</name>
        <dbReference type="ChEBI" id="CHEBI:58210"/>
    </ligand>
</feature>
<feature type="binding site" evidence="2">
    <location>
        <begin position="540"/>
        <end position="541"/>
    </location>
    <ligand>
        <name>FMN</name>
        <dbReference type="ChEBI" id="CHEBI:58210"/>
    </ligand>
</feature>
<sequence length="676" mass="74388">MSTLPPGTAPIKPQYLLSTKPQAIPDDDAAEGTTSIVKSAGRGEDDSGNGQPSRRALAKAQKKARQGANKGRRFGKVRDEVELCWKVANGAICDFGTSCRFTHDIAEYIKEKPQDLRIPLLSEFKESPPYGPDLTVIGKPGKKHPNIDFSTKCPVHEESGECRYGYKCRYMGGHALEDEEGNVTLVADEDKKAQVALTSHEINFVGGDVQKQLRSKKYPTPIASAYLEELKSMNDEAQKPQAVVSETTVMETDEAQPSSTDAVASEATQNGTEPAPAEEVISKRVGGVQSGKDEPDVPMRFSEKRRLDWKGKTYLAPLTTVGNLPFRRMCVKLGADITCGEMGLATSFLAGSKEEWSLVRRHPSEKIFGIQVAGNKPHTLVPTAEVIAKEFPTGVDFVDLNCGCPIDLVFKAGSGSALLDNAGKLGKIIQGMNRALGEIPLTVKIRTGVKEGRNNAHKLMPRISAEWSASAITLHGRTRQQRYTKLADWDYIKECVAAVRAREADEDLPPVPIFGGGDCFSSQDYWEKINNYGVDGVMIGRGALIKPWIFTEIKERREWDISATERLQLIRDYVEYGLNHFGSDTAGVNTTRRYLCEALSFQYRYVPIGLLERLPAKINERAPAFVGRSDLETLLASPDSQDWVKISEMFLGPAPQSWVFTPKHKSNAYGSEEGQG</sequence>
<keyword id="KW-0963">Cytoplasm</keyword>
<keyword id="KW-0285">Flavoprotein</keyword>
<keyword id="KW-0288">FMN</keyword>
<keyword id="KW-0479">Metal-binding</keyword>
<keyword id="KW-0507">mRNA processing</keyword>
<keyword id="KW-0520">NAD</keyword>
<keyword id="KW-0521">NADP</keyword>
<keyword id="KW-0539">Nucleus</keyword>
<keyword id="KW-0560">Oxidoreductase</keyword>
<keyword id="KW-1185">Reference proteome</keyword>
<keyword id="KW-0677">Repeat</keyword>
<keyword id="KW-0819">tRNA processing</keyword>
<keyword id="KW-0862">Zinc</keyword>
<keyword id="KW-0863">Zinc-finger</keyword>